<organism>
    <name type="scientific">Mus musculus</name>
    <name type="common">Mouse</name>
    <dbReference type="NCBI Taxonomy" id="10090"/>
    <lineage>
        <taxon>Eukaryota</taxon>
        <taxon>Metazoa</taxon>
        <taxon>Chordata</taxon>
        <taxon>Craniata</taxon>
        <taxon>Vertebrata</taxon>
        <taxon>Euteleostomi</taxon>
        <taxon>Mammalia</taxon>
        <taxon>Eutheria</taxon>
        <taxon>Euarchontoglires</taxon>
        <taxon>Glires</taxon>
        <taxon>Rodentia</taxon>
        <taxon>Myomorpha</taxon>
        <taxon>Muroidea</taxon>
        <taxon>Muridae</taxon>
        <taxon>Murinae</taxon>
        <taxon>Mus</taxon>
        <taxon>Mus</taxon>
    </lineage>
</organism>
<keyword id="KW-0044">Antibiotic</keyword>
<keyword id="KW-0929">Antimicrobial</keyword>
<keyword id="KW-0211">Defensin</keyword>
<keyword id="KW-1015">Disulfide bond</keyword>
<keyword id="KW-1185">Reference proteome</keyword>
<keyword id="KW-0964">Secreted</keyword>
<keyword id="KW-0732">Signal</keyword>
<comment type="function">
    <text evidence="1">Has antibacterial activity.</text>
</comment>
<comment type="subcellular location">
    <subcellularLocation>
        <location evidence="1">Secreted</location>
    </subcellularLocation>
</comment>
<comment type="tissue specificity">
    <text evidence="4">Only expressed in epididymis (caput, corpus and cauda).</text>
</comment>
<comment type="similarity">
    <text evidence="5">Belongs to the beta-defensin family.</text>
</comment>
<feature type="signal peptide" evidence="2">
    <location>
        <begin position="1"/>
        <end position="20"/>
    </location>
</feature>
<feature type="chain" id="PRO_0000006946" description="Beta-defensin 34">
    <location>
        <begin position="21"/>
        <end position="81"/>
    </location>
</feature>
<feature type="region of interest" description="Disordered" evidence="3">
    <location>
        <begin position="62"/>
        <end position="81"/>
    </location>
</feature>
<feature type="compositionally biased region" description="Polar residues" evidence="3">
    <location>
        <begin position="62"/>
        <end position="72"/>
    </location>
</feature>
<feature type="disulfide bond" evidence="1">
    <location>
        <begin position="28"/>
        <end position="55"/>
    </location>
</feature>
<feature type="disulfide bond" evidence="1">
    <location>
        <begin position="35"/>
        <end position="49"/>
    </location>
</feature>
<feature type="disulfide bond" evidence="1">
    <location>
        <begin position="39"/>
        <end position="56"/>
    </location>
</feature>
<dbReference type="EMBL" id="AJ578469">
    <property type="protein sequence ID" value="CAE17666.1"/>
    <property type="molecule type" value="mRNA"/>
</dbReference>
<dbReference type="CCDS" id="CCDS52497.1"/>
<dbReference type="RefSeq" id="NP_898856.1">
    <property type="nucleotide sequence ID" value="NM_183035.1"/>
</dbReference>
<dbReference type="SMR" id="Q7TNV8"/>
<dbReference type="FunCoup" id="Q7TNV8">
    <property type="interactions" value="4"/>
</dbReference>
<dbReference type="STRING" id="10090.ENSMUSP00000064554"/>
<dbReference type="PaxDb" id="10090-ENSMUSP00000064554"/>
<dbReference type="DNASU" id="360211"/>
<dbReference type="Ensembl" id="ENSMUST00000064475.4">
    <property type="protein sequence ID" value="ENSMUSP00000064554.4"/>
    <property type="gene ID" value="ENSMUSG00000052554.4"/>
</dbReference>
<dbReference type="GeneID" id="360211"/>
<dbReference type="KEGG" id="mmu:360211"/>
<dbReference type="UCSC" id="uc009lad.1">
    <property type="organism name" value="mouse"/>
</dbReference>
<dbReference type="AGR" id="MGI:2672979"/>
<dbReference type="CTD" id="360211"/>
<dbReference type="MGI" id="MGI:2672979">
    <property type="gene designation" value="Defb34"/>
</dbReference>
<dbReference type="VEuPathDB" id="HostDB:ENSMUSG00000052554"/>
<dbReference type="eggNOG" id="ENOG502TF62">
    <property type="taxonomic scope" value="Eukaryota"/>
</dbReference>
<dbReference type="GeneTree" id="ENSGT00950000183398"/>
<dbReference type="HOGENOM" id="CLU_187814_0_0_1"/>
<dbReference type="InParanoid" id="Q7TNV8"/>
<dbReference type="OMA" id="MHAPASC"/>
<dbReference type="OrthoDB" id="9603676at2759"/>
<dbReference type="PhylomeDB" id="Q7TNV8"/>
<dbReference type="BioGRID-ORCS" id="360211">
    <property type="hits" value="1 hit in 75 CRISPR screens"/>
</dbReference>
<dbReference type="PRO" id="PR:Q7TNV8"/>
<dbReference type="Proteomes" id="UP000000589">
    <property type="component" value="Chromosome 8"/>
</dbReference>
<dbReference type="RNAct" id="Q7TNV8">
    <property type="molecule type" value="protein"/>
</dbReference>
<dbReference type="Bgee" id="ENSMUSG00000052554">
    <property type="expression patterns" value="Expressed in granulocyte"/>
</dbReference>
<dbReference type="GO" id="GO:0005576">
    <property type="term" value="C:extracellular region"/>
    <property type="evidence" value="ECO:0007669"/>
    <property type="project" value="UniProtKB-SubCell"/>
</dbReference>
<dbReference type="GO" id="GO:0042742">
    <property type="term" value="P:defense response to bacterium"/>
    <property type="evidence" value="ECO:0007669"/>
    <property type="project" value="UniProtKB-KW"/>
</dbReference>
<dbReference type="GO" id="GO:0045087">
    <property type="term" value="P:innate immune response"/>
    <property type="evidence" value="ECO:0007669"/>
    <property type="project" value="InterPro"/>
</dbReference>
<dbReference type="Gene3D" id="3.10.360.10">
    <property type="entry name" value="Antimicrobial Peptide, Beta-defensin 2, Chain A"/>
    <property type="match status" value="1"/>
</dbReference>
<dbReference type="InterPro" id="IPR025933">
    <property type="entry name" value="Beta_defensin_dom"/>
</dbReference>
<dbReference type="Pfam" id="PF13841">
    <property type="entry name" value="Defensin_beta_2"/>
    <property type="match status" value="1"/>
</dbReference>
<reference key="1">
    <citation type="submission" date="2003-07" db="EMBL/GenBank/DDBJ databases">
        <title>Amino acid residues subject to positive selection in murine beta-defensin antimicrobial peptides.</title>
        <authorList>
            <person name="Maxwell A."/>
            <person name="Dorin J.R."/>
        </authorList>
    </citation>
    <scope>NUCLEOTIDE SEQUENCE [MRNA]</scope>
    <source>
        <strain>C57BL/6J</strain>
    </source>
</reference>
<reference key="2">
    <citation type="journal article" date="2004" name="J. Biol. Chem.">
        <title>Identification on mouse chromosome 8 of new beta-defensin genes with regionally specific expression in the male reproductive organ.</title>
        <authorList>
            <person name="Zaballos A."/>
            <person name="Villares R."/>
            <person name="Albar J.P."/>
            <person name="Martinez-A C."/>
            <person name="Marquez G."/>
        </authorList>
    </citation>
    <scope>TISSUE SPECIFICITY</scope>
    <source>
        <strain>BALB/cJ</strain>
        <tissue>Epididymis</tissue>
    </source>
</reference>
<sequence length="81" mass="9268">MKTFLFLFAVLFFWSQPRMHFFFFDEKCSRINGRCTASCLKNEELVALCWKNLKCCVTVQSCGRSKGNQSDEGSGHMGTRG</sequence>
<protein>
    <recommendedName>
        <fullName>Beta-defensin 34</fullName>
        <shortName>BD-34</shortName>
        <shortName>mBD-34</shortName>
    </recommendedName>
    <alternativeName>
        <fullName>Defensin, beta 34</fullName>
    </alternativeName>
</protein>
<evidence type="ECO:0000250" key="1"/>
<evidence type="ECO:0000255" key="2"/>
<evidence type="ECO:0000256" key="3">
    <source>
        <dbReference type="SAM" id="MobiDB-lite"/>
    </source>
</evidence>
<evidence type="ECO:0000269" key="4">
    <source>
    </source>
</evidence>
<evidence type="ECO:0000305" key="5"/>
<gene>
    <name type="primary">Defb34</name>
</gene>
<name>DFB34_MOUSE</name>
<accession>Q7TNV8</accession>
<proteinExistence type="evidence at transcript level"/>